<proteinExistence type="inferred from homology"/>
<protein>
    <recommendedName>
        <fullName evidence="1">Glucose-6-phosphate isomerase</fullName>
        <shortName evidence="1">GPI</shortName>
        <ecNumber evidence="1">5.3.1.9</ecNumber>
    </recommendedName>
    <alternativeName>
        <fullName evidence="1">Phosphoglucose isomerase</fullName>
        <shortName evidence="1">PGI</shortName>
    </alternativeName>
    <alternativeName>
        <fullName evidence="1">Phosphohexose isomerase</fullName>
        <shortName evidence="1">PHI</shortName>
    </alternativeName>
</protein>
<feature type="chain" id="PRO_1000014012" description="Glucose-6-phosphate isomerase">
    <location>
        <begin position="1"/>
        <end position="545"/>
    </location>
</feature>
<feature type="active site" description="Proton donor" evidence="1">
    <location>
        <position position="351"/>
    </location>
</feature>
<feature type="active site" evidence="1">
    <location>
        <position position="382"/>
    </location>
</feature>
<feature type="active site" evidence="1">
    <location>
        <position position="510"/>
    </location>
</feature>
<comment type="function">
    <text evidence="1">Catalyzes the reversible isomerization of glucose-6-phosphate to fructose-6-phosphate.</text>
</comment>
<comment type="catalytic activity">
    <reaction evidence="1">
        <text>alpha-D-glucose 6-phosphate = beta-D-fructose 6-phosphate</text>
        <dbReference type="Rhea" id="RHEA:11816"/>
        <dbReference type="ChEBI" id="CHEBI:57634"/>
        <dbReference type="ChEBI" id="CHEBI:58225"/>
        <dbReference type="EC" id="5.3.1.9"/>
    </reaction>
</comment>
<comment type="pathway">
    <text evidence="1">Carbohydrate biosynthesis; gluconeogenesis.</text>
</comment>
<comment type="pathway">
    <text evidence="1">Carbohydrate degradation; glycolysis; D-glyceraldehyde 3-phosphate and glycerone phosphate from D-glucose: step 2/4.</text>
</comment>
<comment type="subcellular location">
    <subcellularLocation>
        <location evidence="1">Cytoplasm</location>
    </subcellularLocation>
</comment>
<comment type="similarity">
    <text evidence="1">Belongs to the GPI family.</text>
</comment>
<keyword id="KW-0963">Cytoplasm</keyword>
<keyword id="KW-0312">Gluconeogenesis</keyword>
<keyword id="KW-0324">Glycolysis</keyword>
<keyword id="KW-0413">Isomerase</keyword>
<reference key="1">
    <citation type="submission" date="2007-07" db="EMBL/GenBank/DDBJ databases">
        <title>Complete sequence of chromosome of Shewanella baltica OS185.</title>
        <authorList>
            <consortium name="US DOE Joint Genome Institute"/>
            <person name="Copeland A."/>
            <person name="Lucas S."/>
            <person name="Lapidus A."/>
            <person name="Barry K."/>
            <person name="Glavina del Rio T."/>
            <person name="Dalin E."/>
            <person name="Tice H."/>
            <person name="Pitluck S."/>
            <person name="Sims D."/>
            <person name="Brettin T."/>
            <person name="Bruce D."/>
            <person name="Detter J.C."/>
            <person name="Han C."/>
            <person name="Schmutz J."/>
            <person name="Larimer F."/>
            <person name="Land M."/>
            <person name="Hauser L."/>
            <person name="Kyrpides N."/>
            <person name="Mikhailova N."/>
            <person name="Brettar I."/>
            <person name="Rodrigues J."/>
            <person name="Konstantinidis K."/>
            <person name="Tiedje J."/>
            <person name="Richardson P."/>
        </authorList>
    </citation>
    <scope>NUCLEOTIDE SEQUENCE [LARGE SCALE GENOMIC DNA]</scope>
    <source>
        <strain>OS185</strain>
    </source>
</reference>
<gene>
    <name evidence="1" type="primary">pgi</name>
    <name type="ordered locus">Shew185_1110</name>
</gene>
<organism>
    <name type="scientific">Shewanella baltica (strain OS185)</name>
    <dbReference type="NCBI Taxonomy" id="402882"/>
    <lineage>
        <taxon>Bacteria</taxon>
        <taxon>Pseudomonadati</taxon>
        <taxon>Pseudomonadota</taxon>
        <taxon>Gammaproteobacteria</taxon>
        <taxon>Alteromonadales</taxon>
        <taxon>Shewanellaceae</taxon>
        <taxon>Shewanella</taxon>
    </lineage>
</organism>
<sequence>MTLLTQSSTWQALSAHSKNVPHMRELFATDAARFNKMSLSACGLLLDYSKNKATAETLDLLFTLASNSQLEAKIKAMFAGEIINTTEKRAVLHTALRSTAEQSIIAEGQDIVPEVQQTLNKMQGFVSSVTSGQWKGYTGKAITDIVSIGIGGSFLGPKIVSQALRPYWNPELKCHFVANVDGTSISEKLKLLDPETTLFIMSSKSFGTQETLTNTLTAREWFLAKGGLQSDVAKHFVAVTSNIAKATDFGIDADNIFPMWDWVGGRYSLWSAIGLPIALLIGMDNFRALLSGAHQMDEHFANAPLTENMPVIMGLLSLWYGNFFNAQSHVVLTYDHYLRGLPAYFQQLDMESNGKSVTLNGTDVDYSTGPVIWGGEGTNGQHAYHQLLHQGTALIPADFIMPLQSHNPIGEHHDQLASNCFGQTQALMQGRTFDEALAELANSALSATEKQLIAKHKVMPGNKPSNTLLMDKLTPSTLGALIALYEHRTFVQGAIWDINSFDQWGVELGKDLGNDVLARIGATQDCDALDASSNALINLYRQGKI</sequence>
<dbReference type="EC" id="5.3.1.9" evidence="1"/>
<dbReference type="EMBL" id="CP000753">
    <property type="protein sequence ID" value="ABS07262.1"/>
    <property type="molecule type" value="Genomic_DNA"/>
</dbReference>
<dbReference type="RefSeq" id="WP_012088518.1">
    <property type="nucleotide sequence ID" value="NC_009665.1"/>
</dbReference>
<dbReference type="SMR" id="A6WKC3"/>
<dbReference type="KEGG" id="sbm:Shew185_1110"/>
<dbReference type="HOGENOM" id="CLU_017947_3_1_6"/>
<dbReference type="UniPathway" id="UPA00109">
    <property type="reaction ID" value="UER00181"/>
</dbReference>
<dbReference type="UniPathway" id="UPA00138"/>
<dbReference type="GO" id="GO:0005829">
    <property type="term" value="C:cytosol"/>
    <property type="evidence" value="ECO:0007669"/>
    <property type="project" value="TreeGrafter"/>
</dbReference>
<dbReference type="GO" id="GO:0097367">
    <property type="term" value="F:carbohydrate derivative binding"/>
    <property type="evidence" value="ECO:0007669"/>
    <property type="project" value="InterPro"/>
</dbReference>
<dbReference type="GO" id="GO:0004347">
    <property type="term" value="F:glucose-6-phosphate isomerase activity"/>
    <property type="evidence" value="ECO:0007669"/>
    <property type="project" value="UniProtKB-UniRule"/>
</dbReference>
<dbReference type="GO" id="GO:0048029">
    <property type="term" value="F:monosaccharide binding"/>
    <property type="evidence" value="ECO:0007669"/>
    <property type="project" value="TreeGrafter"/>
</dbReference>
<dbReference type="GO" id="GO:0006094">
    <property type="term" value="P:gluconeogenesis"/>
    <property type="evidence" value="ECO:0007669"/>
    <property type="project" value="UniProtKB-UniRule"/>
</dbReference>
<dbReference type="GO" id="GO:0051156">
    <property type="term" value="P:glucose 6-phosphate metabolic process"/>
    <property type="evidence" value="ECO:0007669"/>
    <property type="project" value="TreeGrafter"/>
</dbReference>
<dbReference type="GO" id="GO:0006096">
    <property type="term" value="P:glycolytic process"/>
    <property type="evidence" value="ECO:0007669"/>
    <property type="project" value="UniProtKB-UniRule"/>
</dbReference>
<dbReference type="CDD" id="cd05015">
    <property type="entry name" value="SIS_PGI_1"/>
    <property type="match status" value="1"/>
</dbReference>
<dbReference type="CDD" id="cd05016">
    <property type="entry name" value="SIS_PGI_2"/>
    <property type="match status" value="1"/>
</dbReference>
<dbReference type="FunFam" id="3.40.50.10490:FF:000018">
    <property type="entry name" value="Glucose-6-phosphate isomerase"/>
    <property type="match status" value="1"/>
</dbReference>
<dbReference type="Gene3D" id="1.10.1390.10">
    <property type="match status" value="1"/>
</dbReference>
<dbReference type="Gene3D" id="3.40.50.10490">
    <property type="entry name" value="Glucose-6-phosphate isomerase like protein, domain 1"/>
    <property type="match status" value="2"/>
</dbReference>
<dbReference type="HAMAP" id="MF_00473">
    <property type="entry name" value="G6P_isomerase"/>
    <property type="match status" value="1"/>
</dbReference>
<dbReference type="InterPro" id="IPR001672">
    <property type="entry name" value="G6P_Isomerase"/>
</dbReference>
<dbReference type="InterPro" id="IPR023096">
    <property type="entry name" value="G6P_Isomerase_C"/>
</dbReference>
<dbReference type="InterPro" id="IPR018189">
    <property type="entry name" value="Phosphoglucose_isomerase_CS"/>
</dbReference>
<dbReference type="InterPro" id="IPR046348">
    <property type="entry name" value="SIS_dom_sf"/>
</dbReference>
<dbReference type="InterPro" id="IPR035476">
    <property type="entry name" value="SIS_PGI_1"/>
</dbReference>
<dbReference type="InterPro" id="IPR035482">
    <property type="entry name" value="SIS_PGI_2"/>
</dbReference>
<dbReference type="NCBIfam" id="NF001211">
    <property type="entry name" value="PRK00179.1"/>
    <property type="match status" value="1"/>
</dbReference>
<dbReference type="PANTHER" id="PTHR11469">
    <property type="entry name" value="GLUCOSE-6-PHOSPHATE ISOMERASE"/>
    <property type="match status" value="1"/>
</dbReference>
<dbReference type="PANTHER" id="PTHR11469:SF1">
    <property type="entry name" value="GLUCOSE-6-PHOSPHATE ISOMERASE"/>
    <property type="match status" value="1"/>
</dbReference>
<dbReference type="Pfam" id="PF00342">
    <property type="entry name" value="PGI"/>
    <property type="match status" value="1"/>
</dbReference>
<dbReference type="PRINTS" id="PR00662">
    <property type="entry name" value="G6PISOMERASE"/>
</dbReference>
<dbReference type="SUPFAM" id="SSF53697">
    <property type="entry name" value="SIS domain"/>
    <property type="match status" value="1"/>
</dbReference>
<dbReference type="PROSITE" id="PS00765">
    <property type="entry name" value="P_GLUCOSE_ISOMERASE_1"/>
    <property type="match status" value="1"/>
</dbReference>
<dbReference type="PROSITE" id="PS00174">
    <property type="entry name" value="P_GLUCOSE_ISOMERASE_2"/>
    <property type="match status" value="1"/>
</dbReference>
<dbReference type="PROSITE" id="PS51463">
    <property type="entry name" value="P_GLUCOSE_ISOMERASE_3"/>
    <property type="match status" value="1"/>
</dbReference>
<name>G6PI_SHEB8</name>
<evidence type="ECO:0000255" key="1">
    <source>
        <dbReference type="HAMAP-Rule" id="MF_00473"/>
    </source>
</evidence>
<accession>A6WKC3</accession>